<organism>
    <name type="scientific">Brucella abortus biovar 1 (strain 9-941)</name>
    <dbReference type="NCBI Taxonomy" id="262698"/>
    <lineage>
        <taxon>Bacteria</taxon>
        <taxon>Pseudomonadati</taxon>
        <taxon>Pseudomonadota</taxon>
        <taxon>Alphaproteobacteria</taxon>
        <taxon>Hyphomicrobiales</taxon>
        <taxon>Brucellaceae</taxon>
        <taxon>Brucella/Ochrobactrum group</taxon>
        <taxon>Brucella</taxon>
    </lineage>
</organism>
<keyword id="KW-0143">Chaperone</keyword>
<keyword id="KW-0963">Cytoplasm</keyword>
<keyword id="KW-0996">Nickel insertion</keyword>
<comment type="function">
    <text evidence="1">Required for maturation of urease via the functional incorporation of the urease nickel metallocenter.</text>
</comment>
<comment type="subunit">
    <text evidence="1">UreD, UreF and UreG form a complex that acts as a GTP-hydrolysis-dependent molecular chaperone, activating the urease apoprotein by helping to assemble the nickel containing metallocenter of UreC. The UreE protein probably delivers the nickel.</text>
</comment>
<comment type="subcellular location">
    <subcellularLocation>
        <location evidence="1">Cytoplasm</location>
    </subcellularLocation>
</comment>
<comment type="similarity">
    <text evidence="1">Belongs to the UreD family.</text>
</comment>
<sequence>MLIINDNNLSGLSLQRVNGTGELSVQFKDGRSRISRLYQEGAAKIRMPQAVTGPLEAILINTSGGLTGGDRLKWDVALDDGASAVITTQACERIYRSGGGEARIATRLKAAKGTRLAWLPQETILFNRSILSRRLDVELEEGAQMLVVEATVFGRLAMGERVVAARFADRWRVRLGGRVIHAEEFRLGPDVGAELQAPAVAGGACAMATVLMVCEQAGRYLETARAIIGEEGGCSLWRVGKASKLVVRLYAPDSYALRRRLCPLVALLNGKAGLPKVWTI</sequence>
<dbReference type="EMBL" id="AE017223">
    <property type="protein sequence ID" value="AAX73696.1"/>
    <property type="molecule type" value="Genomic_DNA"/>
</dbReference>
<dbReference type="RefSeq" id="WP_002963430.1">
    <property type="nucleotide sequence ID" value="NC_006932.1"/>
</dbReference>
<dbReference type="SMR" id="Q57F88"/>
<dbReference type="EnsemblBacteria" id="AAX73696">
    <property type="protein sequence ID" value="AAX73696"/>
    <property type="gene ID" value="BruAb1_0293"/>
</dbReference>
<dbReference type="KEGG" id="bmb:BruAb1_0293"/>
<dbReference type="HOGENOM" id="CLU_056339_2_0_5"/>
<dbReference type="Proteomes" id="UP000000540">
    <property type="component" value="Chromosome I"/>
</dbReference>
<dbReference type="GO" id="GO:0005737">
    <property type="term" value="C:cytoplasm"/>
    <property type="evidence" value="ECO:0007669"/>
    <property type="project" value="UniProtKB-SubCell"/>
</dbReference>
<dbReference type="GO" id="GO:0016151">
    <property type="term" value="F:nickel cation binding"/>
    <property type="evidence" value="ECO:0007669"/>
    <property type="project" value="UniProtKB-UniRule"/>
</dbReference>
<dbReference type="HAMAP" id="MF_01384">
    <property type="entry name" value="UreD"/>
    <property type="match status" value="1"/>
</dbReference>
<dbReference type="InterPro" id="IPR002669">
    <property type="entry name" value="UreD"/>
</dbReference>
<dbReference type="PANTHER" id="PTHR33643">
    <property type="entry name" value="UREASE ACCESSORY PROTEIN D"/>
    <property type="match status" value="1"/>
</dbReference>
<dbReference type="PANTHER" id="PTHR33643:SF1">
    <property type="entry name" value="UREASE ACCESSORY PROTEIN D"/>
    <property type="match status" value="1"/>
</dbReference>
<dbReference type="Pfam" id="PF01774">
    <property type="entry name" value="UreD"/>
    <property type="match status" value="1"/>
</dbReference>
<protein>
    <recommendedName>
        <fullName evidence="1">Urease accessory protein UreD 1</fullName>
    </recommendedName>
</protein>
<gene>
    <name evidence="1" type="primary">ureD1</name>
    <name type="synonym">ureD-1</name>
    <name type="ordered locus">BruAb1_0293</name>
</gene>
<feature type="chain" id="PRO_0000340417" description="Urease accessory protein UreD 1">
    <location>
        <begin position="1"/>
        <end position="280"/>
    </location>
</feature>
<accession>Q57F88</accession>
<name>URED1_BRUAB</name>
<evidence type="ECO:0000255" key="1">
    <source>
        <dbReference type="HAMAP-Rule" id="MF_01384"/>
    </source>
</evidence>
<reference key="1">
    <citation type="journal article" date="2005" name="J. Bacteriol.">
        <title>Completion of the genome sequence of Brucella abortus and comparison to the highly similar genomes of Brucella melitensis and Brucella suis.</title>
        <authorList>
            <person name="Halling S.M."/>
            <person name="Peterson-Burch B.D."/>
            <person name="Bricker B.J."/>
            <person name="Zuerner R.L."/>
            <person name="Qing Z."/>
            <person name="Li L.-L."/>
            <person name="Kapur V."/>
            <person name="Alt D.P."/>
            <person name="Olsen S.C."/>
        </authorList>
    </citation>
    <scope>NUCLEOTIDE SEQUENCE [LARGE SCALE GENOMIC DNA]</scope>
    <source>
        <strain>9-941</strain>
    </source>
</reference>
<proteinExistence type="inferred from homology"/>